<gene>
    <name type="ordered locus">PYRAB09480</name>
    <name type="ORF">PAB0634</name>
</gene>
<feature type="chain" id="PRO_0000184684" description="Uncharacterized ATP-binding protein PYRAB09480">
    <location>
        <begin position="1"/>
        <end position="339"/>
    </location>
</feature>
<feature type="binding site" evidence="1">
    <location>
        <begin position="28"/>
        <end position="35"/>
    </location>
    <ligand>
        <name>ATP</name>
        <dbReference type="ChEBI" id="CHEBI:30616"/>
    </ligand>
</feature>
<keyword id="KW-0067">ATP-binding</keyword>
<keyword id="KW-0547">Nucleotide-binding</keyword>
<evidence type="ECO:0000255" key="1"/>
<evidence type="ECO:0000305" key="2"/>
<comment type="similarity">
    <text evidence="2">Belongs to the archaeal ATPase family.</text>
</comment>
<proteinExistence type="inferred from homology"/>
<organism>
    <name type="scientific">Pyrococcus abyssi (strain GE5 / Orsay)</name>
    <dbReference type="NCBI Taxonomy" id="272844"/>
    <lineage>
        <taxon>Archaea</taxon>
        <taxon>Methanobacteriati</taxon>
        <taxon>Methanobacteriota</taxon>
        <taxon>Thermococci</taxon>
        <taxon>Thermococcales</taxon>
        <taxon>Thermococcaceae</taxon>
        <taxon>Pyrococcus</taxon>
    </lineage>
</organism>
<name>Y948_PYRAB</name>
<reference key="1">
    <citation type="journal article" date="2003" name="Mol. Microbiol.">
        <title>An integrated analysis of the genome of the hyperthermophilic archaeon Pyrococcus abyssi.</title>
        <authorList>
            <person name="Cohen G.N."/>
            <person name="Barbe V."/>
            <person name="Flament D."/>
            <person name="Galperin M."/>
            <person name="Heilig R."/>
            <person name="Lecompte O."/>
            <person name="Poch O."/>
            <person name="Prieur D."/>
            <person name="Querellou J."/>
            <person name="Ripp R."/>
            <person name="Thierry J.-C."/>
            <person name="Van der Oost J."/>
            <person name="Weissenbach J."/>
            <person name="Zivanovic Y."/>
            <person name="Forterre P."/>
        </authorList>
    </citation>
    <scope>NUCLEOTIDE SEQUENCE [LARGE SCALE GENOMIC DNA]</scope>
    <source>
        <strain>GE5 / Orsay</strain>
    </source>
</reference>
<reference key="2">
    <citation type="journal article" date="2012" name="Curr. Microbiol.">
        <title>Re-annotation of two hyperthermophilic archaea Pyrococcus abyssi GE5 and Pyrococcus furiosus DSM 3638.</title>
        <authorList>
            <person name="Gao J."/>
            <person name="Wang J."/>
        </authorList>
    </citation>
    <scope>GENOME REANNOTATION</scope>
    <source>
        <strain>GE5 / Orsay</strain>
    </source>
</reference>
<dbReference type="EMBL" id="AJ248286">
    <property type="protein sequence ID" value="CAB49856.1"/>
    <property type="molecule type" value="Genomic_DNA"/>
</dbReference>
<dbReference type="EMBL" id="HE613800">
    <property type="protein sequence ID" value="CCE70353.1"/>
    <property type="molecule type" value="Genomic_DNA"/>
</dbReference>
<dbReference type="PIR" id="C75069">
    <property type="entry name" value="C75069"/>
</dbReference>
<dbReference type="RefSeq" id="WP_010868065.1">
    <property type="nucleotide sequence ID" value="NC_000868.1"/>
</dbReference>
<dbReference type="KEGG" id="pab:PAB0634"/>
<dbReference type="PATRIC" id="fig|272844.11.peg.999"/>
<dbReference type="eggNOG" id="arCOG03407">
    <property type="taxonomic scope" value="Archaea"/>
</dbReference>
<dbReference type="HOGENOM" id="CLU_068608_0_0_2"/>
<dbReference type="OrthoDB" id="86228at2157"/>
<dbReference type="PhylomeDB" id="Q9V050"/>
<dbReference type="Proteomes" id="UP000000810">
    <property type="component" value="Chromosome"/>
</dbReference>
<dbReference type="Proteomes" id="UP000009139">
    <property type="component" value="Chromosome"/>
</dbReference>
<dbReference type="GO" id="GO:0005524">
    <property type="term" value="F:ATP binding"/>
    <property type="evidence" value="ECO:0007669"/>
    <property type="project" value="UniProtKB-KW"/>
</dbReference>
<dbReference type="GO" id="GO:0016887">
    <property type="term" value="F:ATP hydrolysis activity"/>
    <property type="evidence" value="ECO:0007669"/>
    <property type="project" value="InterPro"/>
</dbReference>
<dbReference type="Gene3D" id="3.40.50.300">
    <property type="entry name" value="P-loop containing nucleotide triphosphate hydrolases"/>
    <property type="match status" value="1"/>
</dbReference>
<dbReference type="Gene3D" id="1.10.10.10">
    <property type="entry name" value="Winged helix-like DNA-binding domain superfamily/Winged helix DNA-binding domain"/>
    <property type="match status" value="1"/>
</dbReference>
<dbReference type="InterPro" id="IPR003593">
    <property type="entry name" value="AAA+_ATPase"/>
</dbReference>
<dbReference type="InterPro" id="IPR051667">
    <property type="entry name" value="Archaeal_ATPase_domain"/>
</dbReference>
<dbReference type="InterPro" id="IPR011579">
    <property type="entry name" value="ATPase_dom"/>
</dbReference>
<dbReference type="InterPro" id="IPR049081">
    <property type="entry name" value="MJ1010-like_2nd"/>
</dbReference>
<dbReference type="InterPro" id="IPR027417">
    <property type="entry name" value="P-loop_NTPase"/>
</dbReference>
<dbReference type="InterPro" id="IPR036388">
    <property type="entry name" value="WH-like_DNA-bd_sf"/>
</dbReference>
<dbReference type="PANTHER" id="PTHR37096:SF1">
    <property type="entry name" value="AAA+ ATPASE DOMAIN-CONTAINING PROTEIN"/>
    <property type="match status" value="1"/>
</dbReference>
<dbReference type="PANTHER" id="PTHR37096">
    <property type="entry name" value="YALI0E33429P"/>
    <property type="match status" value="1"/>
</dbReference>
<dbReference type="Pfam" id="PF01637">
    <property type="entry name" value="ATPase_2"/>
    <property type="match status" value="1"/>
</dbReference>
<dbReference type="Pfam" id="PF21690">
    <property type="entry name" value="MJ1010-like_2nd"/>
    <property type="match status" value="1"/>
</dbReference>
<dbReference type="SMART" id="SM00382">
    <property type="entry name" value="AAA"/>
    <property type="match status" value="1"/>
</dbReference>
<dbReference type="SUPFAM" id="SSF52540">
    <property type="entry name" value="P-loop containing nucleoside triphosphate hydrolases"/>
    <property type="match status" value="1"/>
</dbReference>
<protein>
    <recommendedName>
        <fullName>Uncharacterized ATP-binding protein PYRAB09480</fullName>
    </recommendedName>
</protein>
<sequence length="339" mass="39636">MFFNRERELEKLLRLVSTEPNLITFVYGPINSGKTALMMEFIKKLPDDHIAFYINLRRTPITSYSDFVDVLFSVEFRNKVKTLKEAVSLVLSAGKETFGFPVPTELLARITKEKKPKNAFAYIVTLMEEVRKAGKRPILILDELQVIGDLKVDGSLIYELFNFFIHLTKESHLSHVFVVTSDSLFIERVYSEAMLQGRAEYFLVDDFKRETALRFLKNNGLSDDEAELVWNYFGGKPVYLAETIKHRDELKEWCERMLKLRTSQILDELYALEKELFEKVVKLFFAFEKQESVPYRSLSEEILWAVKRNILFAEPVDRVLRPQGRLELLAIKRILDIIE</sequence>
<accession>Q9V050</accession>
<accession>G8ZIB2</accession>